<comment type="similarity">
    <text evidence="1">Belongs to the UPF0371 family.</text>
</comment>
<organism>
    <name type="scientific">Streptococcus pneumoniae (strain P1031)</name>
    <dbReference type="NCBI Taxonomy" id="488223"/>
    <lineage>
        <taxon>Bacteria</taxon>
        <taxon>Bacillati</taxon>
        <taxon>Bacillota</taxon>
        <taxon>Bacilli</taxon>
        <taxon>Lactobacillales</taxon>
        <taxon>Streptococcaceae</taxon>
        <taxon>Streptococcus</taxon>
    </lineage>
</organism>
<name>Y376_STRZP</name>
<proteinExistence type="inferred from homology"/>
<evidence type="ECO:0000255" key="1">
    <source>
        <dbReference type="HAMAP-Rule" id="MF_01567"/>
    </source>
</evidence>
<sequence>MKKQAFSSEQYLNLQRDHILERINQFDGKLYLEFGGKMLEDFHAARVLPGYEPDNKIKLLQELKEQVEVVIAINASNIEHSKARGDLGISYDQEVLRLIDKFNELGIFVGSVVITQYAGQPAADAFRNQLEKNGIDSYLHYPIKGYPTDMDHIISPEGMGKNDYIKTSRNLIVVTAPGPGSGKLATCMSNMYHDQINGIKSGYAKFETFPVWNLPLHHPVNLAYEAATADLDDVNMIDPFHLQTYGETTVNYNRDIEIFPVLKRMLERILGKSPYASPTDMGVNMVGFAITDDEAAVEASKQEIIRRYYQTVLDFKAEKVGEAAVKKIELLMNDLGITPADRKVAVVARQKAEETGGPALAFELPNGEIITGKNSELFGPTAAALINAIKKSADIAKEVKLIEPEVVKPIQGLKIDHLGSRNPRLHSNEILIALAITATENPDAARAMEELGNLKGSEAHSTIILTDEDKNVLRKLGINVTFDPYYQYDRLYRK</sequence>
<feature type="chain" id="PRO_1000185466" description="UPF0371 protein SPP_0376">
    <location>
        <begin position="1"/>
        <end position="494"/>
    </location>
</feature>
<accession>C1CIK6</accession>
<gene>
    <name type="ordered locus">SPP_0376</name>
</gene>
<protein>
    <recommendedName>
        <fullName evidence="1">UPF0371 protein SPP_0376</fullName>
    </recommendedName>
</protein>
<reference key="1">
    <citation type="journal article" date="2010" name="Genome Biol.">
        <title>Structure and dynamics of the pan-genome of Streptococcus pneumoniae and closely related species.</title>
        <authorList>
            <person name="Donati C."/>
            <person name="Hiller N.L."/>
            <person name="Tettelin H."/>
            <person name="Muzzi A."/>
            <person name="Croucher N.J."/>
            <person name="Angiuoli S.V."/>
            <person name="Oggioni M."/>
            <person name="Dunning Hotopp J.C."/>
            <person name="Hu F.Z."/>
            <person name="Riley D.R."/>
            <person name="Covacci A."/>
            <person name="Mitchell T.J."/>
            <person name="Bentley S.D."/>
            <person name="Kilian M."/>
            <person name="Ehrlich G.D."/>
            <person name="Rappuoli R."/>
            <person name="Moxon E.R."/>
            <person name="Masignani V."/>
        </authorList>
    </citation>
    <scope>NUCLEOTIDE SEQUENCE [LARGE SCALE GENOMIC DNA]</scope>
    <source>
        <strain>P1031</strain>
    </source>
</reference>
<dbReference type="EMBL" id="CP000920">
    <property type="protein sequence ID" value="ACO20936.1"/>
    <property type="molecule type" value="Genomic_DNA"/>
</dbReference>
<dbReference type="RefSeq" id="WP_000743611.1">
    <property type="nucleotide sequence ID" value="NC_012467.1"/>
</dbReference>
<dbReference type="SMR" id="C1CIK6"/>
<dbReference type="KEGG" id="spp:SPP_0376"/>
<dbReference type="HOGENOM" id="CLU_046981_0_0_9"/>
<dbReference type="Gene3D" id="1.20.1570.10">
    <property type="entry name" value="dip2346 domain like"/>
    <property type="match status" value="1"/>
</dbReference>
<dbReference type="Gene3D" id="3.10.630.10">
    <property type="entry name" value="dip2346 domain like"/>
    <property type="match status" value="1"/>
</dbReference>
<dbReference type="Gene3D" id="3.40.140.40">
    <property type="entry name" value="Domain of unknown function (DUF1846), C-terminal subdomain"/>
    <property type="match status" value="1"/>
</dbReference>
<dbReference type="HAMAP" id="MF_01567">
    <property type="entry name" value="UPF0371"/>
    <property type="match status" value="1"/>
</dbReference>
<dbReference type="InterPro" id="IPR014999">
    <property type="entry name" value="DUF1846"/>
</dbReference>
<dbReference type="InterPro" id="IPR048441">
    <property type="entry name" value="DUF1846_C"/>
</dbReference>
<dbReference type="InterPro" id="IPR048496">
    <property type="entry name" value="DUF1846_N"/>
</dbReference>
<dbReference type="NCBIfam" id="NF010184">
    <property type="entry name" value="PRK13663.1"/>
    <property type="match status" value="1"/>
</dbReference>
<dbReference type="Pfam" id="PF08903">
    <property type="entry name" value="DUF1846"/>
    <property type="match status" value="1"/>
</dbReference>
<dbReference type="Pfam" id="PF20921">
    <property type="entry name" value="DUF1846_C"/>
    <property type="match status" value="1"/>
</dbReference>
<dbReference type="PIRSF" id="PIRSF033132">
    <property type="entry name" value="DUF1846"/>
    <property type="match status" value="1"/>
</dbReference>